<sequence>MSYSIGIDYGTASGRVFLINTTNGQVVSKFVKPYTHGVIEGELNGLKIPHTYALQNSNDYLEIMEEGISYIVRESKIDPVNIVGIGIDFTSSTIIFTDENLNPVHNLKQFKNNPHAYVKLWKHHGAYKEAEKLYQTAIENNNKWLGHYGYNVSSEWMIPKIMEVMNRAPEIMEKTAYIMEAGDWIVNKLTNKNVRSNCGLGFKAFWEEETGFHYDLFDKVDPKLSKVIQDKVSAPVVNIGEAVGKLDDKMAQKLGLSKDTMVSPFIIDAHASLLGIGSEKDKEMTMVMGTSTCHLMLNEKQHQVPGISGSVKGAIIPELFAYEAGQSAVGDLFEYVAKQAPKSYVDEAANRNMTVFELMNEKIKHQMPGESGLIALDWHNGNRSVLSDSNLTGCIFGLTLQTKHEDIYRAYLEATAFGTKMIMQQYQDWHMEVEKVFACGGIPKKNAVMMDIYTNVLNKKLIVMDSEYAPAIGAAILGAVSGGAHNSINDAVDAMKEPILYEINPEAEKVQRYETLFKAYKALHDIHGYKKANIMKDIQSLRVEG</sequence>
<protein>
    <recommendedName>
        <fullName evidence="1">Ribulokinase</fullName>
        <ecNumber evidence="1">2.7.1.16</ecNumber>
    </recommendedName>
</protein>
<comment type="catalytic activity">
    <reaction evidence="1">
        <text>D-ribulose + ATP = D-ribulose 5-phosphate + ADP + H(+)</text>
        <dbReference type="Rhea" id="RHEA:17601"/>
        <dbReference type="ChEBI" id="CHEBI:15378"/>
        <dbReference type="ChEBI" id="CHEBI:17173"/>
        <dbReference type="ChEBI" id="CHEBI:30616"/>
        <dbReference type="ChEBI" id="CHEBI:58121"/>
        <dbReference type="ChEBI" id="CHEBI:456216"/>
        <dbReference type="EC" id="2.7.1.16"/>
    </reaction>
</comment>
<comment type="catalytic activity">
    <reaction evidence="1">
        <text>L-ribulose + ATP = L-ribulose 5-phosphate + ADP + H(+)</text>
        <dbReference type="Rhea" id="RHEA:22072"/>
        <dbReference type="ChEBI" id="CHEBI:15378"/>
        <dbReference type="ChEBI" id="CHEBI:16880"/>
        <dbReference type="ChEBI" id="CHEBI:30616"/>
        <dbReference type="ChEBI" id="CHEBI:58226"/>
        <dbReference type="ChEBI" id="CHEBI:456216"/>
        <dbReference type="EC" id="2.7.1.16"/>
    </reaction>
</comment>
<comment type="pathway">
    <text evidence="1">Carbohydrate degradation; L-arabinose degradation via L-ribulose; D-xylulose 5-phosphate from L-arabinose (bacterial route): step 2/3.</text>
</comment>
<comment type="similarity">
    <text evidence="1">Belongs to the ribulokinase family.</text>
</comment>
<gene>
    <name evidence="1" type="primary">araB</name>
    <name type="ordered locus">SAR0557</name>
</gene>
<proteinExistence type="inferred from homology"/>
<keyword id="KW-0054">Arabinose catabolism</keyword>
<keyword id="KW-0067">ATP-binding</keyword>
<keyword id="KW-0119">Carbohydrate metabolism</keyword>
<keyword id="KW-0418">Kinase</keyword>
<keyword id="KW-0547">Nucleotide-binding</keyword>
<keyword id="KW-0808">Transferase</keyword>
<accession>Q6GJB6</accession>
<evidence type="ECO:0000255" key="1">
    <source>
        <dbReference type="HAMAP-Rule" id="MF_00520"/>
    </source>
</evidence>
<name>ARAB_STAAR</name>
<organism>
    <name type="scientific">Staphylococcus aureus (strain MRSA252)</name>
    <dbReference type="NCBI Taxonomy" id="282458"/>
    <lineage>
        <taxon>Bacteria</taxon>
        <taxon>Bacillati</taxon>
        <taxon>Bacillota</taxon>
        <taxon>Bacilli</taxon>
        <taxon>Bacillales</taxon>
        <taxon>Staphylococcaceae</taxon>
        <taxon>Staphylococcus</taxon>
    </lineage>
</organism>
<reference key="1">
    <citation type="journal article" date="2004" name="Proc. Natl. Acad. Sci. U.S.A.">
        <title>Complete genomes of two clinical Staphylococcus aureus strains: evidence for the rapid evolution of virulence and drug resistance.</title>
        <authorList>
            <person name="Holden M.T.G."/>
            <person name="Feil E.J."/>
            <person name="Lindsay J.A."/>
            <person name="Peacock S.J."/>
            <person name="Day N.P.J."/>
            <person name="Enright M.C."/>
            <person name="Foster T.J."/>
            <person name="Moore C.E."/>
            <person name="Hurst L."/>
            <person name="Atkin R."/>
            <person name="Barron A."/>
            <person name="Bason N."/>
            <person name="Bentley S.D."/>
            <person name="Chillingworth C."/>
            <person name="Chillingworth T."/>
            <person name="Churcher C."/>
            <person name="Clark L."/>
            <person name="Corton C."/>
            <person name="Cronin A."/>
            <person name="Doggett J."/>
            <person name="Dowd L."/>
            <person name="Feltwell T."/>
            <person name="Hance Z."/>
            <person name="Harris B."/>
            <person name="Hauser H."/>
            <person name="Holroyd S."/>
            <person name="Jagels K."/>
            <person name="James K.D."/>
            <person name="Lennard N."/>
            <person name="Line A."/>
            <person name="Mayes R."/>
            <person name="Moule S."/>
            <person name="Mungall K."/>
            <person name="Ormond D."/>
            <person name="Quail M.A."/>
            <person name="Rabbinowitsch E."/>
            <person name="Rutherford K.M."/>
            <person name="Sanders M."/>
            <person name="Sharp S."/>
            <person name="Simmonds M."/>
            <person name="Stevens K."/>
            <person name="Whitehead S."/>
            <person name="Barrell B.G."/>
            <person name="Spratt B.G."/>
            <person name="Parkhill J."/>
        </authorList>
    </citation>
    <scope>NUCLEOTIDE SEQUENCE [LARGE SCALE GENOMIC DNA]</scope>
    <source>
        <strain>MRSA252</strain>
    </source>
</reference>
<feature type="chain" id="PRO_0000198369" description="Ribulokinase">
    <location>
        <begin position="1"/>
        <end position="545"/>
    </location>
</feature>
<dbReference type="EC" id="2.7.1.16" evidence="1"/>
<dbReference type="EMBL" id="BX571856">
    <property type="protein sequence ID" value="CAG39578.1"/>
    <property type="molecule type" value="Genomic_DNA"/>
</dbReference>
<dbReference type="RefSeq" id="WP_000122332.1">
    <property type="nucleotide sequence ID" value="NC_002952.2"/>
</dbReference>
<dbReference type="SMR" id="Q6GJB6"/>
<dbReference type="KEGG" id="sar:SAR0557"/>
<dbReference type="HOGENOM" id="CLU_009281_9_1_9"/>
<dbReference type="UniPathway" id="UPA00145">
    <property type="reaction ID" value="UER00566"/>
</dbReference>
<dbReference type="Proteomes" id="UP000000596">
    <property type="component" value="Chromosome"/>
</dbReference>
<dbReference type="GO" id="GO:0005737">
    <property type="term" value="C:cytoplasm"/>
    <property type="evidence" value="ECO:0007669"/>
    <property type="project" value="TreeGrafter"/>
</dbReference>
<dbReference type="GO" id="GO:0005524">
    <property type="term" value="F:ATP binding"/>
    <property type="evidence" value="ECO:0007669"/>
    <property type="project" value="UniProtKB-KW"/>
</dbReference>
<dbReference type="GO" id="GO:0019150">
    <property type="term" value="F:D-ribulokinase activity"/>
    <property type="evidence" value="ECO:0007669"/>
    <property type="project" value="TreeGrafter"/>
</dbReference>
<dbReference type="GO" id="GO:0008741">
    <property type="term" value="F:ribulokinase activity"/>
    <property type="evidence" value="ECO:0007669"/>
    <property type="project" value="UniProtKB-UniRule"/>
</dbReference>
<dbReference type="GO" id="GO:0019569">
    <property type="term" value="P:L-arabinose catabolic process to xylulose 5-phosphate"/>
    <property type="evidence" value="ECO:0007669"/>
    <property type="project" value="UniProtKB-UniRule"/>
</dbReference>
<dbReference type="CDD" id="cd07781">
    <property type="entry name" value="ASKHA_NBD_FGGY_L-RBK"/>
    <property type="match status" value="1"/>
</dbReference>
<dbReference type="Gene3D" id="1.20.58.2240">
    <property type="match status" value="1"/>
</dbReference>
<dbReference type="Gene3D" id="3.30.420.40">
    <property type="match status" value="1"/>
</dbReference>
<dbReference type="HAMAP" id="MF_00520">
    <property type="entry name" value="Ribulokinase"/>
    <property type="match status" value="1"/>
</dbReference>
<dbReference type="InterPro" id="IPR043129">
    <property type="entry name" value="ATPase_NBD"/>
</dbReference>
<dbReference type="InterPro" id="IPR000577">
    <property type="entry name" value="Carb_kinase_FGGY"/>
</dbReference>
<dbReference type="InterPro" id="IPR018485">
    <property type="entry name" value="FGGY_C"/>
</dbReference>
<dbReference type="InterPro" id="IPR018484">
    <property type="entry name" value="FGGY_N"/>
</dbReference>
<dbReference type="InterPro" id="IPR005929">
    <property type="entry name" value="Ribulokinase"/>
</dbReference>
<dbReference type="NCBIfam" id="NF003154">
    <property type="entry name" value="PRK04123.1"/>
    <property type="match status" value="1"/>
</dbReference>
<dbReference type="PANTHER" id="PTHR43435:SF4">
    <property type="entry name" value="FGGY CARBOHYDRATE KINASE DOMAIN-CONTAINING PROTEIN"/>
    <property type="match status" value="1"/>
</dbReference>
<dbReference type="PANTHER" id="PTHR43435">
    <property type="entry name" value="RIBULOKINASE"/>
    <property type="match status" value="1"/>
</dbReference>
<dbReference type="Pfam" id="PF02782">
    <property type="entry name" value="FGGY_C"/>
    <property type="match status" value="1"/>
</dbReference>
<dbReference type="Pfam" id="PF00370">
    <property type="entry name" value="FGGY_N"/>
    <property type="match status" value="1"/>
</dbReference>
<dbReference type="PIRSF" id="PIRSF000538">
    <property type="entry name" value="GlpK"/>
    <property type="match status" value="1"/>
</dbReference>
<dbReference type="SUPFAM" id="SSF53067">
    <property type="entry name" value="Actin-like ATPase domain"/>
    <property type="match status" value="2"/>
</dbReference>